<name>NUOK_ECOL6</name>
<gene>
    <name evidence="2" type="primary">nuoK</name>
    <name type="ordered locus">c2820</name>
</gene>
<sequence>MIPLQHGLILAAILFVLGLTGLVIRRNLLFMLIGLEIMINASALAFVVAGSYWGQTDGQVMYILAISLAAAEASIGLALLLQLHRRRQNLNIDSVSEMRG</sequence>
<accession>P0AFE5</accession>
<accession>P33606</accession>
<accession>P76487</accession>
<accession>P78182</accession>
<protein>
    <recommendedName>
        <fullName evidence="2">NADH-quinone oxidoreductase subunit K</fullName>
        <ecNumber evidence="2">7.1.1.-</ecNumber>
    </recommendedName>
    <alternativeName>
        <fullName evidence="2">NADH dehydrogenase I subunit K</fullName>
    </alternativeName>
    <alternativeName>
        <fullName evidence="2">NDH-1 subunit K</fullName>
    </alternativeName>
</protein>
<dbReference type="EC" id="7.1.1.-" evidence="2"/>
<dbReference type="EMBL" id="AE014075">
    <property type="protein sequence ID" value="AAN81274.1"/>
    <property type="molecule type" value="Genomic_DNA"/>
</dbReference>
<dbReference type="RefSeq" id="WP_000612644.1">
    <property type="nucleotide sequence ID" value="NZ_CP051263.1"/>
</dbReference>
<dbReference type="SMR" id="P0AFE5"/>
<dbReference type="STRING" id="199310.c2820"/>
<dbReference type="GeneID" id="93033872"/>
<dbReference type="KEGG" id="ecc:c2820"/>
<dbReference type="eggNOG" id="COG0713">
    <property type="taxonomic scope" value="Bacteria"/>
</dbReference>
<dbReference type="HOGENOM" id="CLU_144724_0_1_6"/>
<dbReference type="BioCyc" id="ECOL199310:C2820-MONOMER"/>
<dbReference type="Proteomes" id="UP000001410">
    <property type="component" value="Chromosome"/>
</dbReference>
<dbReference type="GO" id="GO:0030964">
    <property type="term" value="C:NADH dehydrogenase complex"/>
    <property type="evidence" value="ECO:0007669"/>
    <property type="project" value="TreeGrafter"/>
</dbReference>
<dbReference type="GO" id="GO:0005886">
    <property type="term" value="C:plasma membrane"/>
    <property type="evidence" value="ECO:0007669"/>
    <property type="project" value="UniProtKB-SubCell"/>
</dbReference>
<dbReference type="GO" id="GO:0050136">
    <property type="term" value="F:NADH:ubiquinone reductase (non-electrogenic) activity"/>
    <property type="evidence" value="ECO:0007669"/>
    <property type="project" value="UniProtKB-UniRule"/>
</dbReference>
<dbReference type="GO" id="GO:0048038">
    <property type="term" value="F:quinone binding"/>
    <property type="evidence" value="ECO:0007669"/>
    <property type="project" value="UniProtKB-KW"/>
</dbReference>
<dbReference type="GO" id="GO:0042773">
    <property type="term" value="P:ATP synthesis coupled electron transport"/>
    <property type="evidence" value="ECO:0007669"/>
    <property type="project" value="InterPro"/>
</dbReference>
<dbReference type="FunFam" id="1.10.287.3510:FF:000001">
    <property type="entry name" value="NADH-quinone oxidoreductase subunit K"/>
    <property type="match status" value="1"/>
</dbReference>
<dbReference type="Gene3D" id="1.10.287.3510">
    <property type="match status" value="1"/>
</dbReference>
<dbReference type="HAMAP" id="MF_01456">
    <property type="entry name" value="NDH1_NuoK"/>
    <property type="match status" value="1"/>
</dbReference>
<dbReference type="InterPro" id="IPR001133">
    <property type="entry name" value="NADH_UbQ_OxRdtase_chain4L/K"/>
</dbReference>
<dbReference type="InterPro" id="IPR039428">
    <property type="entry name" value="NUOK/Mnh_C1-like"/>
</dbReference>
<dbReference type="NCBIfam" id="NF004319">
    <property type="entry name" value="PRK05715.1-1"/>
    <property type="match status" value="1"/>
</dbReference>
<dbReference type="NCBIfam" id="NF004320">
    <property type="entry name" value="PRK05715.1-2"/>
    <property type="match status" value="1"/>
</dbReference>
<dbReference type="PANTHER" id="PTHR11434:SF16">
    <property type="entry name" value="NADH-UBIQUINONE OXIDOREDUCTASE CHAIN 4L"/>
    <property type="match status" value="1"/>
</dbReference>
<dbReference type="PANTHER" id="PTHR11434">
    <property type="entry name" value="NADH-UBIQUINONE OXIDOREDUCTASE SUBUNIT ND4L"/>
    <property type="match status" value="1"/>
</dbReference>
<dbReference type="Pfam" id="PF00420">
    <property type="entry name" value="Oxidored_q2"/>
    <property type="match status" value="1"/>
</dbReference>
<organism>
    <name type="scientific">Escherichia coli O6:H1 (strain CFT073 / ATCC 700928 / UPEC)</name>
    <dbReference type="NCBI Taxonomy" id="199310"/>
    <lineage>
        <taxon>Bacteria</taxon>
        <taxon>Pseudomonadati</taxon>
        <taxon>Pseudomonadota</taxon>
        <taxon>Gammaproteobacteria</taxon>
        <taxon>Enterobacterales</taxon>
        <taxon>Enterobacteriaceae</taxon>
        <taxon>Escherichia</taxon>
    </lineage>
</organism>
<feature type="chain" id="PRO_0000118526" description="NADH-quinone oxidoreductase subunit K">
    <location>
        <begin position="1"/>
        <end position="100"/>
    </location>
</feature>
<feature type="topological domain" description="Periplasmic" evidence="1">
    <location>
        <begin position="1"/>
        <end position="3"/>
    </location>
</feature>
<feature type="transmembrane region" description="Helical" evidence="2">
    <location>
        <begin position="4"/>
        <end position="24"/>
    </location>
</feature>
<feature type="topological domain" description="Cytoplasmic" evidence="1">
    <location>
        <begin position="25"/>
        <end position="27"/>
    </location>
</feature>
<feature type="transmembrane region" description="Helical" evidence="2">
    <location>
        <begin position="28"/>
        <end position="48"/>
    </location>
</feature>
<feature type="topological domain" description="Periplasmic" evidence="1">
    <location>
        <begin position="49"/>
        <end position="59"/>
    </location>
</feature>
<feature type="transmembrane region" description="Helical" evidence="2">
    <location>
        <begin position="60"/>
        <end position="80"/>
    </location>
</feature>
<feature type="topological domain" description="Cytoplasmic" evidence="1">
    <location>
        <begin position="81"/>
        <end position="100"/>
    </location>
</feature>
<reference key="1">
    <citation type="journal article" date="2002" name="Proc. Natl. Acad. Sci. U.S.A.">
        <title>Extensive mosaic structure revealed by the complete genome sequence of uropathogenic Escherichia coli.</title>
        <authorList>
            <person name="Welch R.A."/>
            <person name="Burland V."/>
            <person name="Plunkett G. III"/>
            <person name="Redford P."/>
            <person name="Roesch P."/>
            <person name="Rasko D."/>
            <person name="Buckles E.L."/>
            <person name="Liou S.-R."/>
            <person name="Boutin A."/>
            <person name="Hackett J."/>
            <person name="Stroud D."/>
            <person name="Mayhew G.F."/>
            <person name="Rose D.J."/>
            <person name="Zhou S."/>
            <person name="Schwartz D.C."/>
            <person name="Perna N.T."/>
            <person name="Mobley H.L.T."/>
            <person name="Donnenberg M.S."/>
            <person name="Blattner F.R."/>
        </authorList>
    </citation>
    <scope>NUCLEOTIDE SEQUENCE [LARGE SCALE GENOMIC DNA]</scope>
    <source>
        <strain>CFT073 / ATCC 700928 / UPEC</strain>
    </source>
</reference>
<keyword id="KW-0997">Cell inner membrane</keyword>
<keyword id="KW-1003">Cell membrane</keyword>
<keyword id="KW-0472">Membrane</keyword>
<keyword id="KW-0520">NAD</keyword>
<keyword id="KW-0874">Quinone</keyword>
<keyword id="KW-1185">Reference proteome</keyword>
<keyword id="KW-1278">Translocase</keyword>
<keyword id="KW-0812">Transmembrane</keyword>
<keyword id="KW-1133">Transmembrane helix</keyword>
<keyword id="KW-0813">Transport</keyword>
<keyword id="KW-0830">Ubiquinone</keyword>
<evidence type="ECO:0000255" key="1"/>
<evidence type="ECO:0000255" key="2">
    <source>
        <dbReference type="HAMAP-Rule" id="MF_01456"/>
    </source>
</evidence>
<comment type="function">
    <text evidence="2">NDH-1 shuttles electrons from NADH, via FMN and iron-sulfur (Fe-S) centers, to quinones in the respiratory chain. The immediate electron acceptor for the enzyme in this species is believed to be ubiquinone. Couples the redox reaction to proton translocation (for every two electrons transferred, four hydrogen ions are translocated across the cytoplasmic membrane), and thus conserves the redox energy in a proton gradient.</text>
</comment>
<comment type="catalytic activity">
    <reaction evidence="2">
        <text>a quinone + NADH + 5 H(+)(in) = a quinol + NAD(+) + 4 H(+)(out)</text>
        <dbReference type="Rhea" id="RHEA:57888"/>
        <dbReference type="ChEBI" id="CHEBI:15378"/>
        <dbReference type="ChEBI" id="CHEBI:24646"/>
        <dbReference type="ChEBI" id="CHEBI:57540"/>
        <dbReference type="ChEBI" id="CHEBI:57945"/>
        <dbReference type="ChEBI" id="CHEBI:132124"/>
    </reaction>
</comment>
<comment type="subunit">
    <text evidence="2">NDH-1 is composed of 13 different subunits. Subunits NuoA, H, J, K, L, M, N constitute the membrane sector of the complex.</text>
</comment>
<comment type="subcellular location">
    <subcellularLocation>
        <location evidence="2">Cell inner membrane</location>
        <topology evidence="2">Multi-pass membrane protein</topology>
    </subcellularLocation>
</comment>
<comment type="similarity">
    <text evidence="2">Belongs to the complex I subunit 4L family.</text>
</comment>
<proteinExistence type="inferred from homology"/>